<organism>
    <name type="scientific">Rickettsia conorii (strain ATCC VR-613 / Malish 7)</name>
    <dbReference type="NCBI Taxonomy" id="272944"/>
    <lineage>
        <taxon>Bacteria</taxon>
        <taxon>Pseudomonadati</taxon>
        <taxon>Pseudomonadota</taxon>
        <taxon>Alphaproteobacteria</taxon>
        <taxon>Rickettsiales</taxon>
        <taxon>Rickettsiaceae</taxon>
        <taxon>Rickettsieae</taxon>
        <taxon>Rickettsia</taxon>
        <taxon>spotted fever group</taxon>
    </lineage>
</organism>
<dbReference type="EMBL" id="AE006914">
    <property type="protein sequence ID" value="AAL03447.1"/>
    <property type="status" value="ALT_INIT"/>
    <property type="molecule type" value="Genomic_DNA"/>
</dbReference>
<dbReference type="PIR" id="E97813">
    <property type="entry name" value="E97813"/>
</dbReference>
<dbReference type="RefSeq" id="WP_041471735.1">
    <property type="nucleotide sequence ID" value="NC_003103.1"/>
</dbReference>
<dbReference type="SMR" id="Q92H62"/>
<dbReference type="GeneID" id="928848"/>
<dbReference type="KEGG" id="rco:RC0909"/>
<dbReference type="PATRIC" id="fig|272944.4.peg.1033"/>
<dbReference type="HOGENOM" id="CLU_567284_0_0_5"/>
<dbReference type="Proteomes" id="UP000000816">
    <property type="component" value="Chromosome"/>
</dbReference>
<dbReference type="GO" id="GO:0009986">
    <property type="term" value="C:cell surface"/>
    <property type="evidence" value="ECO:0007669"/>
    <property type="project" value="UniProtKB-SubCell"/>
</dbReference>
<dbReference type="GO" id="GO:0003779">
    <property type="term" value="F:actin binding"/>
    <property type="evidence" value="ECO:0007669"/>
    <property type="project" value="UniProtKB-KW"/>
</dbReference>
<dbReference type="Gene3D" id="6.10.280.150">
    <property type="match status" value="1"/>
</dbReference>
<dbReference type="InterPro" id="IPR051661">
    <property type="entry name" value="Actin_filament_regulator"/>
</dbReference>
<dbReference type="PANTHER" id="PTHR47102">
    <property type="entry name" value="PROTEIN BNI1"/>
    <property type="match status" value="1"/>
</dbReference>
<dbReference type="PANTHER" id="PTHR47102:SF2">
    <property type="entry name" value="PROTEIN BNI1"/>
    <property type="match status" value="1"/>
</dbReference>
<dbReference type="PRINTS" id="PR01217">
    <property type="entry name" value="PRICHEXTENSN"/>
</dbReference>
<reference key="1">
    <citation type="journal article" date="2001" name="Science">
        <title>Mechanisms of evolution in Rickettsia conorii and R. prowazekii.</title>
        <authorList>
            <person name="Ogata H."/>
            <person name="Audic S."/>
            <person name="Renesto-Audiffren P."/>
            <person name="Fournier P.-E."/>
            <person name="Barbe V."/>
            <person name="Samson D."/>
            <person name="Roux V."/>
            <person name="Cossart P."/>
            <person name="Weissenbach J."/>
            <person name="Claverie J.-M."/>
            <person name="Raoult D."/>
        </authorList>
    </citation>
    <scope>NUCLEOTIDE SEQUENCE [LARGE SCALE GENOMIC DNA]</scope>
    <source>
        <strain>ATCC VR-613 / Malish 7</strain>
    </source>
</reference>
<reference key="2">
    <citation type="journal article" date="2004" name="Nature">
        <title>The RickA protein of Rickettsia conorii activates the Arp2/3 complex.</title>
        <authorList>
            <person name="Gouin E."/>
            <person name="Egile C."/>
            <person name="Dehoux P."/>
            <person name="Villiers V."/>
            <person name="Adams J."/>
            <person name="Gertler F."/>
            <person name="Li R."/>
            <person name="Cossart P."/>
        </authorList>
    </citation>
    <scope>FUNCTION</scope>
    <scope>SUBUNIT</scope>
    <scope>SUBCELLULAR LOCATION</scope>
    <source>
        <strain>ATCC VR-613 / Malish 7</strain>
    </source>
</reference>
<proteinExistence type="evidence at protein level"/>
<sequence length="517" mass="58359">MVKEIDINKLLAQENNALNTILSQVNELCKQNKQLQGLIEIQNETKELEKEHNRSLPWFKRFVKTVSNVKYILIKSEEQLTNEAIKYNNKILKDIDNKIYNIAEKSAPLKQALQEEIEKNFKDLTKKDLSKDQRARLSEVFFSYKSKPERFSALHMTNPLQFINAEALEKQYNSLNATKQNIQNLISANSNIKELKEIQKQVAEIRAEVPHTFFEKLNNIWQNVKNVFVNNSEQVLAKNKESNTRTIRKIDEQLYKTKHKFEELIENKERNIKDIIAKLPDNEKLQKIVSNLTNHMASQKEPILANASLAKPLENNITPPSPLPENNIPSPPPPPPPSPLPENNIPSSPPPPPPPPLPENNIPSPPPPPPPPPPPPMAPAQAETLSKPIESTTVKKLANQPRPSIDTSDLMREIAGPKKLKKVEFDPNTGKPVAHSHSKPAQNVNALSGLESIFARRAVIKVSDSSSSESDSGNWSDVSVNRNKSKMLKTKGERDAKMTTHAQKINNRNSQNPSFVR</sequence>
<protein>
    <recommendedName>
        <fullName>Arp2/3 complex-activating protein rickA</fullName>
    </recommendedName>
    <alternativeName>
        <fullName>Actin polymerization protein rickA</fullName>
    </alternativeName>
</protein>
<name>RICKA_RICCN</name>
<keyword id="KW-0009">Actin-binding</keyword>
<comment type="function">
    <text evidence="2">Recruits and activates the Arp2/3 complex, which in turn leads to actin polymerization, promoting Rickettsia motility during infection.</text>
</comment>
<comment type="subunit">
    <text evidence="2">Homodimer.</text>
</comment>
<comment type="subcellular location">
    <subcellularLocation>
        <location evidence="2">Cell surface</location>
    </subcellularLocation>
</comment>
<comment type="sequence caution" evidence="3">
    <conflict type="erroneous initiation">
        <sequence resource="EMBL-CDS" id="AAL03447"/>
    </conflict>
</comment>
<feature type="chain" id="PRO_0000259652" description="Arp2/3 complex-activating protein rickA">
    <location>
        <begin position="1"/>
        <end position="517"/>
    </location>
</feature>
<feature type="domain" description="WH2">
    <location>
        <begin position="406"/>
        <end position="423"/>
    </location>
</feature>
<feature type="region of interest" description="Disordered" evidence="1">
    <location>
        <begin position="313"/>
        <end position="441"/>
    </location>
</feature>
<feature type="region of interest" description="Central and acidic domains">
    <location>
        <begin position="444"/>
        <end position="477"/>
    </location>
</feature>
<feature type="region of interest" description="Disordered" evidence="1">
    <location>
        <begin position="461"/>
        <end position="517"/>
    </location>
</feature>
<feature type="compositionally biased region" description="Pro residues" evidence="1">
    <location>
        <begin position="319"/>
        <end position="340"/>
    </location>
</feature>
<feature type="compositionally biased region" description="Pro residues" evidence="1">
    <location>
        <begin position="347"/>
        <end position="378"/>
    </location>
</feature>
<feature type="compositionally biased region" description="Low complexity" evidence="1">
    <location>
        <begin position="463"/>
        <end position="479"/>
    </location>
</feature>
<feature type="compositionally biased region" description="Polar residues" evidence="1">
    <location>
        <begin position="500"/>
        <end position="517"/>
    </location>
</feature>
<gene>
    <name type="primary">rickA</name>
    <name type="ordered locus">RC0909</name>
</gene>
<evidence type="ECO:0000256" key="1">
    <source>
        <dbReference type="SAM" id="MobiDB-lite"/>
    </source>
</evidence>
<evidence type="ECO:0000269" key="2">
    <source>
    </source>
</evidence>
<evidence type="ECO:0000305" key="3"/>
<accession>Q92H62</accession>